<reference key="1">
    <citation type="journal article" date="2004" name="Nat. Biotechnol.">
        <title>Complete sequence and comparative genome analysis of the dairy bacterium Streptococcus thermophilus.</title>
        <authorList>
            <person name="Bolotin A."/>
            <person name="Quinquis B."/>
            <person name="Renault P."/>
            <person name="Sorokin A."/>
            <person name="Ehrlich S.D."/>
            <person name="Kulakauskas S."/>
            <person name="Lapidus A."/>
            <person name="Goltsman E."/>
            <person name="Mazur M."/>
            <person name="Pusch G.D."/>
            <person name="Fonstein M."/>
            <person name="Overbeek R."/>
            <person name="Kyprides N."/>
            <person name="Purnelle B."/>
            <person name="Prozzi D."/>
            <person name="Ngui K."/>
            <person name="Masuy D."/>
            <person name="Hancy F."/>
            <person name="Burteau S."/>
            <person name="Boutry M."/>
            <person name="Delcour J."/>
            <person name="Goffeau A."/>
            <person name="Hols P."/>
        </authorList>
    </citation>
    <scope>NUCLEOTIDE SEQUENCE [LARGE SCALE GENOMIC DNA]</scope>
    <source>
        <strain>CNRZ 1066</strain>
    </source>
</reference>
<accession>Q5LZI0</accession>
<name>METK_STRT1</name>
<organism>
    <name type="scientific">Streptococcus thermophilus (strain CNRZ 1066)</name>
    <dbReference type="NCBI Taxonomy" id="299768"/>
    <lineage>
        <taxon>Bacteria</taxon>
        <taxon>Bacillati</taxon>
        <taxon>Bacillota</taxon>
        <taxon>Bacilli</taxon>
        <taxon>Lactobacillales</taxon>
        <taxon>Streptococcaceae</taxon>
        <taxon>Streptococcus</taxon>
    </lineage>
</organism>
<keyword id="KW-0067">ATP-binding</keyword>
<keyword id="KW-0963">Cytoplasm</keyword>
<keyword id="KW-0460">Magnesium</keyword>
<keyword id="KW-0479">Metal-binding</keyword>
<keyword id="KW-0547">Nucleotide-binding</keyword>
<keyword id="KW-0554">One-carbon metabolism</keyword>
<keyword id="KW-0630">Potassium</keyword>
<keyword id="KW-0808">Transferase</keyword>
<protein>
    <recommendedName>
        <fullName evidence="1">S-adenosylmethionine synthase</fullName>
        <shortName evidence="1">AdoMet synthase</shortName>
        <ecNumber evidence="1">2.5.1.6</ecNumber>
    </recommendedName>
    <alternativeName>
        <fullName evidence="1">MAT</fullName>
    </alternativeName>
    <alternativeName>
        <fullName evidence="1">Methionine adenosyltransferase</fullName>
    </alternativeName>
</protein>
<evidence type="ECO:0000255" key="1">
    <source>
        <dbReference type="HAMAP-Rule" id="MF_00086"/>
    </source>
</evidence>
<evidence type="ECO:0000305" key="2"/>
<gene>
    <name evidence="1" type="primary">metK</name>
    <name type="ordered locus">str1172</name>
</gene>
<sequence length="397" mass="42965">MSERKLFTSESVSEGHPDKIADQISDAILDAILAEDPDAHVAAETAVYTGSVHIFGEVSTTAYVDINRVVRDTIAEIGYNNAEYGFAAESVGVHPSLIEQSPDIAQGVNESLEVRGTGDQDSLDLIGAGDQGLMFGFAIDETPEFMPLPVSLSHKLVKKLADLRKSGEISYLRPDAKSQVTVEYDENDQPVRVDTVVISTQHDPEATNDQIRHDVIEKVIKAVIPAEYLDEDTKFFINPTGRFVIGGPQGDSGLTGRKIIVDTYGGYSRHGGGAFSGKDATKVDRSASYAARYIAKNIVAAGLARKAEVQLAYAIGVANPVSVRVDTFGTATVAERKLESAVRDLFDLRPAGIIQMLDLKRPIYRQTAAYGHMGRTDVDLPWEKLDKVDALKAAVEA</sequence>
<dbReference type="EC" id="2.5.1.6" evidence="1"/>
<dbReference type="EMBL" id="CP000024">
    <property type="protein sequence ID" value="AAV62719.1"/>
    <property type="status" value="ALT_INIT"/>
    <property type="molecule type" value="Genomic_DNA"/>
</dbReference>
<dbReference type="RefSeq" id="WP_011227281.1">
    <property type="nucleotide sequence ID" value="NC_006449.1"/>
</dbReference>
<dbReference type="SMR" id="Q5LZI0"/>
<dbReference type="KEGG" id="stc:str1172"/>
<dbReference type="HOGENOM" id="CLU_041802_1_1_9"/>
<dbReference type="UniPathway" id="UPA00315">
    <property type="reaction ID" value="UER00080"/>
</dbReference>
<dbReference type="GO" id="GO:0005737">
    <property type="term" value="C:cytoplasm"/>
    <property type="evidence" value="ECO:0007669"/>
    <property type="project" value="UniProtKB-SubCell"/>
</dbReference>
<dbReference type="GO" id="GO:0005524">
    <property type="term" value="F:ATP binding"/>
    <property type="evidence" value="ECO:0007669"/>
    <property type="project" value="UniProtKB-UniRule"/>
</dbReference>
<dbReference type="GO" id="GO:0000287">
    <property type="term" value="F:magnesium ion binding"/>
    <property type="evidence" value="ECO:0007669"/>
    <property type="project" value="UniProtKB-UniRule"/>
</dbReference>
<dbReference type="GO" id="GO:0004478">
    <property type="term" value="F:methionine adenosyltransferase activity"/>
    <property type="evidence" value="ECO:0007669"/>
    <property type="project" value="UniProtKB-UniRule"/>
</dbReference>
<dbReference type="GO" id="GO:0006730">
    <property type="term" value="P:one-carbon metabolic process"/>
    <property type="evidence" value="ECO:0007669"/>
    <property type="project" value="UniProtKB-KW"/>
</dbReference>
<dbReference type="GO" id="GO:0006556">
    <property type="term" value="P:S-adenosylmethionine biosynthetic process"/>
    <property type="evidence" value="ECO:0007669"/>
    <property type="project" value="UniProtKB-UniRule"/>
</dbReference>
<dbReference type="CDD" id="cd18079">
    <property type="entry name" value="S-AdoMet_synt"/>
    <property type="match status" value="1"/>
</dbReference>
<dbReference type="FunFam" id="3.30.300.10:FF:000003">
    <property type="entry name" value="S-adenosylmethionine synthase"/>
    <property type="match status" value="1"/>
</dbReference>
<dbReference type="Gene3D" id="3.30.300.10">
    <property type="match status" value="3"/>
</dbReference>
<dbReference type="HAMAP" id="MF_00086">
    <property type="entry name" value="S_AdoMet_synth1"/>
    <property type="match status" value="1"/>
</dbReference>
<dbReference type="InterPro" id="IPR022631">
    <property type="entry name" value="ADOMET_SYNTHASE_CS"/>
</dbReference>
<dbReference type="InterPro" id="IPR022630">
    <property type="entry name" value="S-AdoMet_synt_C"/>
</dbReference>
<dbReference type="InterPro" id="IPR022629">
    <property type="entry name" value="S-AdoMet_synt_central"/>
</dbReference>
<dbReference type="InterPro" id="IPR022628">
    <property type="entry name" value="S-AdoMet_synt_N"/>
</dbReference>
<dbReference type="InterPro" id="IPR002133">
    <property type="entry name" value="S-AdoMet_synthetase"/>
</dbReference>
<dbReference type="InterPro" id="IPR022636">
    <property type="entry name" value="S-AdoMet_synthetase_sfam"/>
</dbReference>
<dbReference type="NCBIfam" id="TIGR01034">
    <property type="entry name" value="metK"/>
    <property type="match status" value="1"/>
</dbReference>
<dbReference type="PANTHER" id="PTHR11964">
    <property type="entry name" value="S-ADENOSYLMETHIONINE SYNTHETASE"/>
    <property type="match status" value="1"/>
</dbReference>
<dbReference type="Pfam" id="PF02773">
    <property type="entry name" value="S-AdoMet_synt_C"/>
    <property type="match status" value="1"/>
</dbReference>
<dbReference type="Pfam" id="PF02772">
    <property type="entry name" value="S-AdoMet_synt_M"/>
    <property type="match status" value="1"/>
</dbReference>
<dbReference type="Pfam" id="PF00438">
    <property type="entry name" value="S-AdoMet_synt_N"/>
    <property type="match status" value="1"/>
</dbReference>
<dbReference type="PIRSF" id="PIRSF000497">
    <property type="entry name" value="MAT"/>
    <property type="match status" value="1"/>
</dbReference>
<dbReference type="SUPFAM" id="SSF55973">
    <property type="entry name" value="S-adenosylmethionine synthetase"/>
    <property type="match status" value="3"/>
</dbReference>
<dbReference type="PROSITE" id="PS00376">
    <property type="entry name" value="ADOMET_SYNTHASE_1"/>
    <property type="match status" value="1"/>
</dbReference>
<dbReference type="PROSITE" id="PS00377">
    <property type="entry name" value="ADOMET_SYNTHASE_2"/>
    <property type="match status" value="1"/>
</dbReference>
<proteinExistence type="inferred from homology"/>
<feature type="chain" id="PRO_0000241046" description="S-adenosylmethionine synthase">
    <location>
        <begin position="1"/>
        <end position="397"/>
    </location>
</feature>
<feature type="region of interest" description="Flexible loop" evidence="1">
    <location>
        <begin position="100"/>
        <end position="110"/>
    </location>
</feature>
<feature type="binding site" description="in other chain" evidence="1">
    <location>
        <position position="16"/>
    </location>
    <ligand>
        <name>ATP</name>
        <dbReference type="ChEBI" id="CHEBI:30616"/>
        <note>ligand shared between two neighboring subunits</note>
    </ligand>
</feature>
<feature type="binding site" evidence="1">
    <location>
        <position position="18"/>
    </location>
    <ligand>
        <name>Mg(2+)</name>
        <dbReference type="ChEBI" id="CHEBI:18420"/>
    </ligand>
</feature>
<feature type="binding site" evidence="1">
    <location>
        <position position="44"/>
    </location>
    <ligand>
        <name>K(+)</name>
        <dbReference type="ChEBI" id="CHEBI:29103"/>
    </ligand>
</feature>
<feature type="binding site" description="in other chain" evidence="1">
    <location>
        <position position="57"/>
    </location>
    <ligand>
        <name>L-methionine</name>
        <dbReference type="ChEBI" id="CHEBI:57844"/>
        <note>ligand shared between two neighboring subunits</note>
    </ligand>
</feature>
<feature type="binding site" description="in other chain" evidence="1">
    <location>
        <position position="100"/>
    </location>
    <ligand>
        <name>L-methionine</name>
        <dbReference type="ChEBI" id="CHEBI:57844"/>
        <note>ligand shared between two neighboring subunits</note>
    </ligand>
</feature>
<feature type="binding site" description="in other chain" evidence="1">
    <location>
        <begin position="175"/>
        <end position="177"/>
    </location>
    <ligand>
        <name>ATP</name>
        <dbReference type="ChEBI" id="CHEBI:30616"/>
        <note>ligand shared between two neighboring subunits</note>
    </ligand>
</feature>
<feature type="binding site" description="in other chain" evidence="1">
    <location>
        <begin position="242"/>
        <end position="243"/>
    </location>
    <ligand>
        <name>ATP</name>
        <dbReference type="ChEBI" id="CHEBI:30616"/>
        <note>ligand shared between two neighboring subunits</note>
    </ligand>
</feature>
<feature type="binding site" evidence="1">
    <location>
        <position position="251"/>
    </location>
    <ligand>
        <name>ATP</name>
        <dbReference type="ChEBI" id="CHEBI:30616"/>
        <note>ligand shared between two neighboring subunits</note>
    </ligand>
</feature>
<feature type="binding site" evidence="1">
    <location>
        <position position="251"/>
    </location>
    <ligand>
        <name>L-methionine</name>
        <dbReference type="ChEBI" id="CHEBI:57844"/>
        <note>ligand shared between two neighboring subunits</note>
    </ligand>
</feature>
<feature type="binding site" description="in other chain" evidence="1">
    <location>
        <begin position="257"/>
        <end position="258"/>
    </location>
    <ligand>
        <name>ATP</name>
        <dbReference type="ChEBI" id="CHEBI:30616"/>
        <note>ligand shared between two neighboring subunits</note>
    </ligand>
</feature>
<feature type="binding site" evidence="1">
    <location>
        <position position="274"/>
    </location>
    <ligand>
        <name>ATP</name>
        <dbReference type="ChEBI" id="CHEBI:30616"/>
        <note>ligand shared between two neighboring subunits</note>
    </ligand>
</feature>
<feature type="binding site" evidence="1">
    <location>
        <position position="278"/>
    </location>
    <ligand>
        <name>ATP</name>
        <dbReference type="ChEBI" id="CHEBI:30616"/>
        <note>ligand shared between two neighboring subunits</note>
    </ligand>
</feature>
<feature type="binding site" description="in other chain" evidence="1">
    <location>
        <position position="282"/>
    </location>
    <ligand>
        <name>L-methionine</name>
        <dbReference type="ChEBI" id="CHEBI:57844"/>
        <note>ligand shared between two neighboring subunits</note>
    </ligand>
</feature>
<comment type="function">
    <text evidence="1">Catalyzes the formation of S-adenosylmethionine (AdoMet) from methionine and ATP. The overall synthetic reaction is composed of two sequential steps, AdoMet formation and the subsequent tripolyphosphate hydrolysis which occurs prior to release of AdoMet from the enzyme.</text>
</comment>
<comment type="catalytic activity">
    <reaction evidence="1">
        <text>L-methionine + ATP + H2O = S-adenosyl-L-methionine + phosphate + diphosphate</text>
        <dbReference type="Rhea" id="RHEA:21080"/>
        <dbReference type="ChEBI" id="CHEBI:15377"/>
        <dbReference type="ChEBI" id="CHEBI:30616"/>
        <dbReference type="ChEBI" id="CHEBI:33019"/>
        <dbReference type="ChEBI" id="CHEBI:43474"/>
        <dbReference type="ChEBI" id="CHEBI:57844"/>
        <dbReference type="ChEBI" id="CHEBI:59789"/>
        <dbReference type="EC" id="2.5.1.6"/>
    </reaction>
</comment>
<comment type="cofactor">
    <cofactor evidence="1">
        <name>Mg(2+)</name>
        <dbReference type="ChEBI" id="CHEBI:18420"/>
    </cofactor>
    <text evidence="1">Binds 2 divalent ions per subunit.</text>
</comment>
<comment type="cofactor">
    <cofactor evidence="1">
        <name>K(+)</name>
        <dbReference type="ChEBI" id="CHEBI:29103"/>
    </cofactor>
    <text evidence="1">Binds 1 potassium ion per subunit.</text>
</comment>
<comment type="pathway">
    <text evidence="1">Amino-acid biosynthesis; S-adenosyl-L-methionine biosynthesis; S-adenosyl-L-methionine from L-methionine: step 1/1.</text>
</comment>
<comment type="subunit">
    <text evidence="1">Homotetramer; dimer of dimers.</text>
</comment>
<comment type="subcellular location">
    <subcellularLocation>
        <location evidence="1">Cytoplasm</location>
    </subcellularLocation>
</comment>
<comment type="similarity">
    <text evidence="1">Belongs to the AdoMet synthase family.</text>
</comment>
<comment type="sequence caution" evidence="2">
    <conflict type="erroneous initiation">
        <sequence resource="EMBL-CDS" id="AAV62719"/>
    </conflict>
</comment>